<proteinExistence type="inferred from homology"/>
<gene>
    <name evidence="2" type="primary">ier3ip1</name>
</gene>
<feature type="chain" id="PRO_0000257965" description="Immediate early response 3-interacting protein 1">
    <location>
        <begin position="1"/>
        <end position="82"/>
    </location>
</feature>
<feature type="transmembrane region" description="Helical" evidence="3">
    <location>
        <begin position="2"/>
        <end position="22"/>
    </location>
</feature>
<feature type="transmembrane region" description="Helical" evidence="3">
    <location>
        <begin position="62"/>
        <end position="82"/>
    </location>
</feature>
<keyword id="KW-0256">Endoplasmic reticulum</keyword>
<keyword id="KW-0472">Membrane</keyword>
<keyword id="KW-0653">Protein transport</keyword>
<keyword id="KW-1185">Reference proteome</keyword>
<keyword id="KW-0812">Transmembrane</keyword>
<keyword id="KW-1133">Transmembrane helix</keyword>
<keyword id="KW-0813">Transport</keyword>
<comment type="function">
    <text evidence="1 2">Regulator of endoplasmic reticulum secretion that acts as a key determinant of brain size. Required for secretion of extracellular matrix proteins. Required for correct brain development by depositing sufficient extracellular matrix proteins for tissue integrity and the proliferation of neural progenitors (By similarity). Acts as a regulator of the unfolded protein response (UPR) (By similarity).</text>
</comment>
<comment type="subcellular location">
    <subcellularLocation>
        <location evidence="2">Endoplasmic reticulum membrane</location>
        <topology evidence="3">Multi-pass membrane protein</topology>
    </subcellularLocation>
</comment>
<comment type="similarity">
    <text evidence="4">Belongs to the YOS1 family.</text>
</comment>
<organism>
    <name type="scientific">Xenopus laevis</name>
    <name type="common">African clawed frog</name>
    <dbReference type="NCBI Taxonomy" id="8355"/>
    <lineage>
        <taxon>Eukaryota</taxon>
        <taxon>Metazoa</taxon>
        <taxon>Chordata</taxon>
        <taxon>Craniata</taxon>
        <taxon>Vertebrata</taxon>
        <taxon>Euteleostomi</taxon>
        <taxon>Amphibia</taxon>
        <taxon>Batrachia</taxon>
        <taxon>Anura</taxon>
        <taxon>Pipoidea</taxon>
        <taxon>Pipidae</taxon>
        <taxon>Xenopodinae</taxon>
        <taxon>Xenopus</taxon>
        <taxon>Xenopus</taxon>
    </lineage>
</organism>
<sequence length="82" mass="8983">MAFTLYTLLQAALLCVNAVAVLHEERFLSKIGWGVDHGIGGFGEEPGMKSQLMNLIRSVRTVMRVPLIIVNSVTIVLLLLFG</sequence>
<dbReference type="EMBL" id="BC106448">
    <property type="protein sequence ID" value="AAI06449.1"/>
    <property type="molecule type" value="mRNA"/>
</dbReference>
<dbReference type="RefSeq" id="NP_001153213.1">
    <property type="nucleotide sequence ID" value="NM_001159741.1"/>
</dbReference>
<dbReference type="SMR" id="Q3B8G7"/>
<dbReference type="DNASU" id="735184"/>
<dbReference type="GeneID" id="735184"/>
<dbReference type="KEGG" id="xla:735184"/>
<dbReference type="AGR" id="Xenbase:XB-GENE-6254264"/>
<dbReference type="CTD" id="735184"/>
<dbReference type="Xenbase" id="XB-GENE-6254264">
    <property type="gene designation" value="ier3ip1.L"/>
</dbReference>
<dbReference type="OMA" id="FLCKIGW"/>
<dbReference type="OrthoDB" id="15356at2759"/>
<dbReference type="Proteomes" id="UP000186698">
    <property type="component" value="Chromosome 1L"/>
</dbReference>
<dbReference type="Bgee" id="735184">
    <property type="expression patterns" value="Expressed in pancreas and 19 other cell types or tissues"/>
</dbReference>
<dbReference type="GO" id="GO:0030134">
    <property type="term" value="C:COPII-coated ER to Golgi transport vesicle"/>
    <property type="evidence" value="ECO:0000318"/>
    <property type="project" value="GO_Central"/>
</dbReference>
<dbReference type="GO" id="GO:0005789">
    <property type="term" value="C:endoplasmic reticulum membrane"/>
    <property type="evidence" value="ECO:0000250"/>
    <property type="project" value="UniProtKB"/>
</dbReference>
<dbReference type="GO" id="GO:0000139">
    <property type="term" value="C:Golgi membrane"/>
    <property type="evidence" value="ECO:0000318"/>
    <property type="project" value="GO_Central"/>
</dbReference>
<dbReference type="GO" id="GO:0007420">
    <property type="term" value="P:brain development"/>
    <property type="evidence" value="ECO:0000250"/>
    <property type="project" value="UniProtKB"/>
</dbReference>
<dbReference type="GO" id="GO:0006888">
    <property type="term" value="P:endoplasmic reticulum to Golgi vesicle-mediated transport"/>
    <property type="evidence" value="ECO:0000318"/>
    <property type="project" value="GO_Central"/>
</dbReference>
<dbReference type="GO" id="GO:0035265">
    <property type="term" value="P:organ growth"/>
    <property type="evidence" value="ECO:0000250"/>
    <property type="project" value="UniProtKB"/>
</dbReference>
<dbReference type="GO" id="GO:0003331">
    <property type="term" value="P:positive regulation of extracellular matrix constituent secretion"/>
    <property type="evidence" value="ECO:0000250"/>
    <property type="project" value="UniProtKB"/>
</dbReference>
<dbReference type="GO" id="GO:0050714">
    <property type="term" value="P:positive regulation of protein secretion"/>
    <property type="evidence" value="ECO:0000250"/>
    <property type="project" value="UniProtKB"/>
</dbReference>
<dbReference type="GO" id="GO:0015031">
    <property type="term" value="P:protein transport"/>
    <property type="evidence" value="ECO:0007669"/>
    <property type="project" value="UniProtKB-KW"/>
</dbReference>
<dbReference type="InterPro" id="IPR013880">
    <property type="entry name" value="Yos1"/>
</dbReference>
<dbReference type="PANTHER" id="PTHR15858">
    <property type="entry name" value="IMMEDIATE EARLY RESPONSE 3-INTERACTING PROTEIN 1"/>
    <property type="match status" value="1"/>
</dbReference>
<dbReference type="PANTHER" id="PTHR15858:SF0">
    <property type="entry name" value="IMMEDIATE EARLY RESPONSE 3-INTERACTING PROTEIN 1"/>
    <property type="match status" value="1"/>
</dbReference>
<dbReference type="Pfam" id="PF08571">
    <property type="entry name" value="Yos1"/>
    <property type="match status" value="1"/>
</dbReference>
<evidence type="ECO:0000250" key="1">
    <source>
        <dbReference type="UniProtKB" id="Q9CR20"/>
    </source>
</evidence>
<evidence type="ECO:0000250" key="2">
    <source>
        <dbReference type="UniProtKB" id="Q9Y5U9"/>
    </source>
</evidence>
<evidence type="ECO:0000255" key="3"/>
<evidence type="ECO:0000305" key="4"/>
<evidence type="ECO:0000312" key="5">
    <source>
        <dbReference type="EMBL" id="AAI06449.1"/>
    </source>
</evidence>
<name>IR3IP_XENLA</name>
<reference key="1">
    <citation type="submission" date="2005-10" db="EMBL/GenBank/DDBJ databases">
        <authorList>
            <consortium name="NIH - Xenopus Gene Collection (XGC) project"/>
        </authorList>
    </citation>
    <scope>NUCLEOTIDE SEQUENCE [LARGE SCALE MRNA]</scope>
    <source>
        <tissue evidence="5">Testis</tissue>
    </source>
</reference>
<accession>Q3B8G7</accession>
<protein>
    <recommendedName>
        <fullName evidence="4">Immediate early response 3-interacting protein 1</fullName>
    </recommendedName>
</protein>